<protein>
    <recommendedName>
        <fullName evidence="1">3-methyl-2-oxobutanoate hydroxymethyltransferase</fullName>
        <ecNumber evidence="1">2.1.2.11</ecNumber>
    </recommendedName>
    <alternativeName>
        <fullName evidence="1">Ketopantoate hydroxymethyltransferase</fullName>
        <shortName evidence="1">KPHMT</shortName>
    </alternativeName>
</protein>
<dbReference type="EC" id="2.1.2.11" evidence="1"/>
<dbReference type="EMBL" id="AM260525">
    <property type="protein sequence ID" value="CAK01205.1"/>
    <property type="molecule type" value="Genomic_DNA"/>
</dbReference>
<dbReference type="RefSeq" id="WP_012231318.1">
    <property type="nucleotide sequence ID" value="NC_010161.1"/>
</dbReference>
<dbReference type="SMR" id="A9IRP2"/>
<dbReference type="KEGG" id="btr:BT_0790"/>
<dbReference type="eggNOG" id="COG0413">
    <property type="taxonomic scope" value="Bacteria"/>
</dbReference>
<dbReference type="HOGENOM" id="CLU_036645_1_0_5"/>
<dbReference type="UniPathway" id="UPA00028">
    <property type="reaction ID" value="UER00003"/>
</dbReference>
<dbReference type="Proteomes" id="UP000001592">
    <property type="component" value="Chromosome"/>
</dbReference>
<dbReference type="GO" id="GO:0005737">
    <property type="term" value="C:cytoplasm"/>
    <property type="evidence" value="ECO:0007669"/>
    <property type="project" value="UniProtKB-SubCell"/>
</dbReference>
<dbReference type="GO" id="GO:0003864">
    <property type="term" value="F:3-methyl-2-oxobutanoate hydroxymethyltransferase activity"/>
    <property type="evidence" value="ECO:0007669"/>
    <property type="project" value="UniProtKB-UniRule"/>
</dbReference>
<dbReference type="GO" id="GO:0000287">
    <property type="term" value="F:magnesium ion binding"/>
    <property type="evidence" value="ECO:0007669"/>
    <property type="project" value="TreeGrafter"/>
</dbReference>
<dbReference type="GO" id="GO:0015940">
    <property type="term" value="P:pantothenate biosynthetic process"/>
    <property type="evidence" value="ECO:0007669"/>
    <property type="project" value="UniProtKB-UniRule"/>
</dbReference>
<dbReference type="CDD" id="cd06557">
    <property type="entry name" value="KPHMT-like"/>
    <property type="match status" value="1"/>
</dbReference>
<dbReference type="FunFam" id="3.20.20.60:FF:000003">
    <property type="entry name" value="3-methyl-2-oxobutanoate hydroxymethyltransferase"/>
    <property type="match status" value="1"/>
</dbReference>
<dbReference type="Gene3D" id="3.20.20.60">
    <property type="entry name" value="Phosphoenolpyruvate-binding domains"/>
    <property type="match status" value="1"/>
</dbReference>
<dbReference type="HAMAP" id="MF_00156">
    <property type="entry name" value="PanB"/>
    <property type="match status" value="1"/>
</dbReference>
<dbReference type="InterPro" id="IPR003700">
    <property type="entry name" value="Pantoate_hydroxy_MeTrfase"/>
</dbReference>
<dbReference type="InterPro" id="IPR015813">
    <property type="entry name" value="Pyrv/PenolPyrv_kinase-like_dom"/>
</dbReference>
<dbReference type="InterPro" id="IPR040442">
    <property type="entry name" value="Pyrv_kinase-like_dom_sf"/>
</dbReference>
<dbReference type="NCBIfam" id="TIGR00222">
    <property type="entry name" value="panB"/>
    <property type="match status" value="1"/>
</dbReference>
<dbReference type="NCBIfam" id="NF001452">
    <property type="entry name" value="PRK00311.1"/>
    <property type="match status" value="1"/>
</dbReference>
<dbReference type="PANTHER" id="PTHR20881">
    <property type="entry name" value="3-METHYL-2-OXOBUTANOATE HYDROXYMETHYLTRANSFERASE"/>
    <property type="match status" value="1"/>
</dbReference>
<dbReference type="PANTHER" id="PTHR20881:SF0">
    <property type="entry name" value="3-METHYL-2-OXOBUTANOATE HYDROXYMETHYLTRANSFERASE"/>
    <property type="match status" value="1"/>
</dbReference>
<dbReference type="Pfam" id="PF02548">
    <property type="entry name" value="Pantoate_transf"/>
    <property type="match status" value="1"/>
</dbReference>
<dbReference type="PIRSF" id="PIRSF000388">
    <property type="entry name" value="Pantoate_hydroxy_MeTrfase"/>
    <property type="match status" value="1"/>
</dbReference>
<dbReference type="SUPFAM" id="SSF51621">
    <property type="entry name" value="Phosphoenolpyruvate/pyruvate domain"/>
    <property type="match status" value="1"/>
</dbReference>
<gene>
    <name evidence="1" type="primary">panB</name>
    <name type="ordered locus">BT_0790</name>
</gene>
<reference key="1">
    <citation type="journal article" date="2007" name="Nat. Genet.">
        <title>Genomic analysis of Bartonella identifies type IV secretion systems as host adaptability factors.</title>
        <authorList>
            <person name="Saenz H.L."/>
            <person name="Engel P."/>
            <person name="Stoeckli M.C."/>
            <person name="Lanz C."/>
            <person name="Raddatz G."/>
            <person name="Vayssier-Taussat M."/>
            <person name="Birtles R."/>
            <person name="Schuster S.C."/>
            <person name="Dehio C."/>
        </authorList>
    </citation>
    <scope>NUCLEOTIDE SEQUENCE [LARGE SCALE GENOMIC DNA]</scope>
    <source>
        <strain>CIP 105476 / IBS 506</strain>
    </source>
</reference>
<feature type="chain" id="PRO_1000076816" description="3-methyl-2-oxobutanoate hydroxymethyltransferase">
    <location>
        <begin position="1"/>
        <end position="271"/>
    </location>
</feature>
<feature type="active site" description="Proton acceptor" evidence="1">
    <location>
        <position position="187"/>
    </location>
</feature>
<feature type="binding site" evidence="1">
    <location>
        <begin position="49"/>
        <end position="50"/>
    </location>
    <ligand>
        <name>3-methyl-2-oxobutanoate</name>
        <dbReference type="ChEBI" id="CHEBI:11851"/>
    </ligand>
</feature>
<feature type="binding site" evidence="1">
    <location>
        <position position="49"/>
    </location>
    <ligand>
        <name>Mg(2+)</name>
        <dbReference type="ChEBI" id="CHEBI:18420"/>
    </ligand>
</feature>
<feature type="binding site" evidence="1">
    <location>
        <position position="88"/>
    </location>
    <ligand>
        <name>3-methyl-2-oxobutanoate</name>
        <dbReference type="ChEBI" id="CHEBI:11851"/>
    </ligand>
</feature>
<feature type="binding site" evidence="1">
    <location>
        <position position="88"/>
    </location>
    <ligand>
        <name>Mg(2+)</name>
        <dbReference type="ChEBI" id="CHEBI:18420"/>
    </ligand>
</feature>
<feature type="binding site" evidence="1">
    <location>
        <position position="118"/>
    </location>
    <ligand>
        <name>3-methyl-2-oxobutanoate</name>
        <dbReference type="ChEBI" id="CHEBI:11851"/>
    </ligand>
</feature>
<feature type="binding site" evidence="1">
    <location>
        <position position="120"/>
    </location>
    <ligand>
        <name>Mg(2+)</name>
        <dbReference type="ChEBI" id="CHEBI:18420"/>
    </ligand>
</feature>
<evidence type="ECO:0000255" key="1">
    <source>
        <dbReference type="HAMAP-Rule" id="MF_00156"/>
    </source>
</evidence>
<accession>A9IRP2</accession>
<organism>
    <name type="scientific">Bartonella tribocorum (strain CIP 105476 / IBS 506)</name>
    <dbReference type="NCBI Taxonomy" id="382640"/>
    <lineage>
        <taxon>Bacteria</taxon>
        <taxon>Pseudomonadati</taxon>
        <taxon>Pseudomonadota</taxon>
        <taxon>Alphaproteobacteria</taxon>
        <taxon>Hyphomicrobiales</taxon>
        <taxon>Bartonellaceae</taxon>
        <taxon>Bartonella</taxon>
    </lineage>
</organism>
<name>PANB_BART1</name>
<proteinExistence type="inferred from homology"/>
<comment type="function">
    <text evidence="1">Catalyzes the reversible reaction in which hydroxymethyl group from 5,10-methylenetetrahydrofolate is transferred onto alpha-ketoisovalerate to form ketopantoate.</text>
</comment>
<comment type="catalytic activity">
    <reaction evidence="1">
        <text>3-methyl-2-oxobutanoate + (6R)-5,10-methylene-5,6,7,8-tetrahydrofolate + H2O = 2-dehydropantoate + (6S)-5,6,7,8-tetrahydrofolate</text>
        <dbReference type="Rhea" id="RHEA:11824"/>
        <dbReference type="ChEBI" id="CHEBI:11561"/>
        <dbReference type="ChEBI" id="CHEBI:11851"/>
        <dbReference type="ChEBI" id="CHEBI:15377"/>
        <dbReference type="ChEBI" id="CHEBI:15636"/>
        <dbReference type="ChEBI" id="CHEBI:57453"/>
        <dbReference type="EC" id="2.1.2.11"/>
    </reaction>
</comment>
<comment type="cofactor">
    <cofactor evidence="1">
        <name>Mg(2+)</name>
        <dbReference type="ChEBI" id="CHEBI:18420"/>
    </cofactor>
    <text evidence="1">Binds 1 Mg(2+) ion per subunit.</text>
</comment>
<comment type="pathway">
    <text evidence="1">Cofactor biosynthesis; (R)-pantothenate biosynthesis; (R)-pantoate from 3-methyl-2-oxobutanoate: step 1/2.</text>
</comment>
<comment type="subunit">
    <text evidence="1">Homodecamer; pentamer of dimers.</text>
</comment>
<comment type="subcellular location">
    <subcellularLocation>
        <location evidence="1">Cytoplasm</location>
    </subcellularLocation>
</comment>
<comment type="similarity">
    <text evidence="1">Belongs to the PanB family.</text>
</comment>
<keyword id="KW-0963">Cytoplasm</keyword>
<keyword id="KW-0460">Magnesium</keyword>
<keyword id="KW-0479">Metal-binding</keyword>
<keyword id="KW-0566">Pantothenate biosynthesis</keyword>
<keyword id="KW-0808">Transferase</keyword>
<sequence>MSVHKMVKRITSSQIRARKGQQPIVSLTAYQAYTARIADPYCDILLVGDSVGMVVYGFETTLPVNLDMMILHGQAVVRGSQKALVVIDMPFGSYEESKEQAFLNASRILAQTGCGAVKLEGGVYMAETIDFLCKRGIPVMGHIGLTPQAVNRFGGFNTQGRKESDWQRIEDDAVVIENAGAFAIVLEGIVEPLAVKLTEKLSIPTIGIGASNQCDGQVLVMEDMLGYGAHVPKFVRRYGDLEQAMETAIKNYAEDVTSRAFPAEKEVYKLK</sequence>